<proteinExistence type="inferred from homology"/>
<gene>
    <name type="ordered locus">SAB1566c</name>
</gene>
<evidence type="ECO:0000255" key="1">
    <source>
        <dbReference type="HAMAP-Rule" id="MF_00457"/>
    </source>
</evidence>
<dbReference type="EMBL" id="AJ938182">
    <property type="protein sequence ID" value="CAI81255.1"/>
    <property type="molecule type" value="Genomic_DNA"/>
</dbReference>
<dbReference type="RefSeq" id="WP_000777186.1">
    <property type="nucleotide sequence ID" value="NC_007622.1"/>
</dbReference>
<dbReference type="SMR" id="Q2YTD3"/>
<dbReference type="KEGG" id="sab:SAB1566c"/>
<dbReference type="HOGENOM" id="CLU_070010_4_1_9"/>
<dbReference type="GO" id="GO:0016787">
    <property type="term" value="F:hydrolase activity"/>
    <property type="evidence" value="ECO:0007669"/>
    <property type="project" value="UniProtKB-UniRule"/>
</dbReference>
<dbReference type="CDD" id="cd06262">
    <property type="entry name" value="metallo-hydrolase-like_MBL-fold"/>
    <property type="match status" value="1"/>
</dbReference>
<dbReference type="Gene3D" id="3.60.15.10">
    <property type="entry name" value="Ribonuclease Z/Hydroxyacylglutathione hydrolase-like"/>
    <property type="match status" value="1"/>
</dbReference>
<dbReference type="HAMAP" id="MF_00457">
    <property type="entry name" value="UPF0173"/>
    <property type="match status" value="1"/>
</dbReference>
<dbReference type="InterPro" id="IPR001279">
    <property type="entry name" value="Metallo-B-lactamas"/>
</dbReference>
<dbReference type="InterPro" id="IPR036866">
    <property type="entry name" value="RibonucZ/Hydroxyglut_hydro"/>
</dbReference>
<dbReference type="InterPro" id="IPR022877">
    <property type="entry name" value="UPF0173"/>
</dbReference>
<dbReference type="InterPro" id="IPR050114">
    <property type="entry name" value="UPF0173_UPF0282_UlaG_hydrolase"/>
</dbReference>
<dbReference type="NCBIfam" id="NF001911">
    <property type="entry name" value="PRK00685.1"/>
    <property type="match status" value="1"/>
</dbReference>
<dbReference type="PANTHER" id="PTHR43546:SF3">
    <property type="entry name" value="UPF0173 METAL-DEPENDENT HYDROLASE MJ1163"/>
    <property type="match status" value="1"/>
</dbReference>
<dbReference type="PANTHER" id="PTHR43546">
    <property type="entry name" value="UPF0173 METAL-DEPENDENT HYDROLASE MJ1163-RELATED"/>
    <property type="match status" value="1"/>
</dbReference>
<dbReference type="Pfam" id="PF12706">
    <property type="entry name" value="Lactamase_B_2"/>
    <property type="match status" value="1"/>
</dbReference>
<dbReference type="SMART" id="SM00849">
    <property type="entry name" value="Lactamase_B"/>
    <property type="match status" value="1"/>
</dbReference>
<dbReference type="SUPFAM" id="SSF56281">
    <property type="entry name" value="Metallo-hydrolase/oxidoreductase"/>
    <property type="match status" value="1"/>
</dbReference>
<feature type="chain" id="PRO_1000013512" description="UPF0173 metal-dependent hydrolase SAB1566c">
    <location>
        <begin position="1"/>
        <end position="229"/>
    </location>
</feature>
<reference key="1">
    <citation type="journal article" date="2007" name="PLoS ONE">
        <title>Molecular correlates of host specialization in Staphylococcus aureus.</title>
        <authorList>
            <person name="Herron-Olson L."/>
            <person name="Fitzgerald J.R."/>
            <person name="Musser J.M."/>
            <person name="Kapur V."/>
        </authorList>
    </citation>
    <scope>NUCLEOTIDE SEQUENCE [LARGE SCALE GENOMIC DNA]</scope>
    <source>
        <strain>bovine RF122 / ET3-1</strain>
    </source>
</reference>
<keyword id="KW-0378">Hydrolase</keyword>
<sequence length="229" mass="25233">MKLSFHGQSTIYLEGNNKKVIVDPFISNNPKCDLNIETVQVDYIVLTHGHFDHFGDVVELAKKTGATVIGSAEMADYLSSYHGVENVHGMNIGGKANFDFGSVKFVQAFHSSSFTHENGIPVYLGMPIGIVFEVEGKTIYHTGDTGLFSDMSLIAKRHPVDVCFVPIGDNFTMGIDDASYAINEFIKPKISVPIHYDTFPLIEQDPQQFKDAVNVGDVQILKPGESVQF</sequence>
<name>Y1566_STAAB</name>
<organism>
    <name type="scientific">Staphylococcus aureus (strain bovine RF122 / ET3-1)</name>
    <dbReference type="NCBI Taxonomy" id="273036"/>
    <lineage>
        <taxon>Bacteria</taxon>
        <taxon>Bacillati</taxon>
        <taxon>Bacillota</taxon>
        <taxon>Bacilli</taxon>
        <taxon>Bacillales</taxon>
        <taxon>Staphylococcaceae</taxon>
        <taxon>Staphylococcus</taxon>
    </lineage>
</organism>
<comment type="similarity">
    <text evidence="1">Belongs to the UPF0173 family.</text>
</comment>
<accession>Q2YTD3</accession>
<protein>
    <recommendedName>
        <fullName evidence="1">UPF0173 metal-dependent hydrolase SAB1566c</fullName>
    </recommendedName>
</protein>